<organism>
    <name type="scientific">Actinobacillus pleuropneumoniae serotype 5b (strain L20)</name>
    <dbReference type="NCBI Taxonomy" id="416269"/>
    <lineage>
        <taxon>Bacteria</taxon>
        <taxon>Pseudomonadati</taxon>
        <taxon>Pseudomonadota</taxon>
        <taxon>Gammaproteobacteria</taxon>
        <taxon>Pasteurellales</taxon>
        <taxon>Pasteurellaceae</taxon>
        <taxon>Actinobacillus</taxon>
    </lineage>
</organism>
<name>URED_ACTP2</name>
<dbReference type="EMBL" id="CP000569">
    <property type="protein sequence ID" value="ABN74695.1"/>
    <property type="molecule type" value="Genomic_DNA"/>
</dbReference>
<dbReference type="RefSeq" id="WP_009874589.1">
    <property type="nucleotide sequence ID" value="NC_009053.1"/>
</dbReference>
<dbReference type="SMR" id="A3N2Q9"/>
<dbReference type="STRING" id="416269.APL_1611"/>
<dbReference type="EnsemblBacteria" id="ABN74695">
    <property type="protein sequence ID" value="ABN74695"/>
    <property type="gene ID" value="APL_1611"/>
</dbReference>
<dbReference type="KEGG" id="apl:APL_1611"/>
<dbReference type="PATRIC" id="fig|416269.6.peg.1677"/>
<dbReference type="eggNOG" id="COG0829">
    <property type="taxonomic scope" value="Bacteria"/>
</dbReference>
<dbReference type="HOGENOM" id="CLU_056339_6_0_6"/>
<dbReference type="Proteomes" id="UP000001432">
    <property type="component" value="Chromosome"/>
</dbReference>
<dbReference type="GO" id="GO:0005737">
    <property type="term" value="C:cytoplasm"/>
    <property type="evidence" value="ECO:0007669"/>
    <property type="project" value="UniProtKB-SubCell"/>
</dbReference>
<dbReference type="GO" id="GO:0016151">
    <property type="term" value="F:nickel cation binding"/>
    <property type="evidence" value="ECO:0007669"/>
    <property type="project" value="UniProtKB-UniRule"/>
</dbReference>
<dbReference type="HAMAP" id="MF_01384">
    <property type="entry name" value="UreD"/>
    <property type="match status" value="1"/>
</dbReference>
<dbReference type="InterPro" id="IPR002669">
    <property type="entry name" value="UreD"/>
</dbReference>
<dbReference type="PANTHER" id="PTHR33643">
    <property type="entry name" value="UREASE ACCESSORY PROTEIN D"/>
    <property type="match status" value="1"/>
</dbReference>
<dbReference type="PANTHER" id="PTHR33643:SF1">
    <property type="entry name" value="UREASE ACCESSORY PROTEIN D"/>
    <property type="match status" value="1"/>
</dbReference>
<dbReference type="Pfam" id="PF01774">
    <property type="entry name" value="UreD"/>
    <property type="match status" value="1"/>
</dbReference>
<comment type="function">
    <text evidence="1">Required for maturation of urease via the functional incorporation of the urease nickel metallocenter.</text>
</comment>
<comment type="subunit">
    <text evidence="1">UreD, UreF and UreG form a complex that acts as a GTP-hydrolysis-dependent molecular chaperone, activating the urease apoprotein by helping to assemble the nickel containing metallocenter of UreC. The UreE protein probably delivers the nickel.</text>
</comment>
<comment type="subcellular location">
    <subcellularLocation>
        <location evidence="1">Cytoplasm</location>
    </subcellularLocation>
</comment>
<comment type="similarity">
    <text evidence="1">Belongs to the UreD family.</text>
</comment>
<gene>
    <name evidence="1" type="primary">ureD</name>
    <name type="ordered locus">APL_1611</name>
</gene>
<proteinExistence type="inferred from homology"/>
<reference key="1">
    <citation type="journal article" date="2008" name="J. Bacteriol.">
        <title>The complete genome sequence of Actinobacillus pleuropneumoniae L20 (serotype 5b).</title>
        <authorList>
            <person name="Foote S.J."/>
            <person name="Bosse J.T."/>
            <person name="Bouevitch A.B."/>
            <person name="Langford P.R."/>
            <person name="Young N.M."/>
            <person name="Nash J.H.E."/>
        </authorList>
    </citation>
    <scope>NUCLEOTIDE SEQUENCE [LARGE SCALE GENOMIC DNA]</scope>
    <source>
        <strain>L20</strain>
    </source>
</reference>
<evidence type="ECO:0000255" key="1">
    <source>
        <dbReference type="HAMAP-Rule" id="MF_01384"/>
    </source>
</evidence>
<sequence>MQSKLLLSTKLTSQGKTQLDQYFVSPPFKVMTLPAYDDAWQNGLNAMQMSSSPGLLAGDLLDIEISLADNTALSLNTQAFTRVQSMNEGDYATQKTCIKLGKNSRLFYLPHPLVLHKDSGFKQTTEIEMSEQSELIYGEIVAIGRVLNGERFAFRHFASYLRISYQNQPLVTDRIQWLPAKMALTSLSQMEDFSHQGSLTYVNLAKNAVEIKAMVSELQALAAEQKNMLIGVSQLNEGGLMVRVLAHRADIIQHLFERIGQVLKAQSNIV</sequence>
<accession>A3N2Q9</accession>
<keyword id="KW-0143">Chaperone</keyword>
<keyword id="KW-0963">Cytoplasm</keyword>
<keyword id="KW-0996">Nickel insertion</keyword>
<keyword id="KW-1185">Reference proteome</keyword>
<feature type="chain" id="PRO_0000340402" description="Urease accessory protein UreD">
    <location>
        <begin position="1"/>
        <end position="270"/>
    </location>
</feature>
<protein>
    <recommendedName>
        <fullName evidence="1">Urease accessory protein UreD</fullName>
    </recommendedName>
</protein>